<evidence type="ECO:0000255" key="1">
    <source>
        <dbReference type="HAMAP-Rule" id="MF_01504"/>
    </source>
</evidence>
<evidence type="ECO:0000256" key="2">
    <source>
        <dbReference type="SAM" id="MobiDB-lite"/>
    </source>
</evidence>
<keyword id="KW-1185">Reference proteome</keyword>
<keyword id="KW-0749">Sporulation</keyword>
<feature type="chain" id="PRO_0000221463" description="Small, acid-soluble spore protein K">
    <location>
        <begin position="1"/>
        <end position="51"/>
    </location>
</feature>
<feature type="region of interest" description="Disordered" evidence="2">
    <location>
        <begin position="1"/>
        <end position="51"/>
    </location>
</feature>
<feature type="compositionally biased region" description="Basic and acidic residues" evidence="2">
    <location>
        <begin position="21"/>
        <end position="43"/>
    </location>
</feature>
<accession>Q5WIG0</accession>
<dbReference type="EMBL" id="AP006627">
    <property type="protein sequence ID" value="BAD63845.1"/>
    <property type="molecule type" value="Genomic_DNA"/>
</dbReference>
<dbReference type="RefSeq" id="WP_011246158.1">
    <property type="nucleotide sequence ID" value="NC_006582.1"/>
</dbReference>
<dbReference type="STRING" id="66692.ABC1307"/>
<dbReference type="GeneID" id="86925422"/>
<dbReference type="KEGG" id="bcl:ABC1307"/>
<dbReference type="HOGENOM" id="CLU_204383_0_0_9"/>
<dbReference type="OrthoDB" id="2382188at2"/>
<dbReference type="Proteomes" id="UP000001168">
    <property type="component" value="Chromosome"/>
</dbReference>
<dbReference type="GO" id="GO:0042601">
    <property type="term" value="C:endospore-forming forespore"/>
    <property type="evidence" value="ECO:0007669"/>
    <property type="project" value="InterPro"/>
</dbReference>
<dbReference type="GO" id="GO:0030436">
    <property type="term" value="P:asexual sporulation"/>
    <property type="evidence" value="ECO:0007669"/>
    <property type="project" value="UniProtKB-UniRule"/>
</dbReference>
<dbReference type="GO" id="GO:0030435">
    <property type="term" value="P:sporulation resulting in formation of a cellular spore"/>
    <property type="evidence" value="ECO:0007669"/>
    <property type="project" value="UniProtKB-KW"/>
</dbReference>
<dbReference type="HAMAP" id="MF_01504">
    <property type="entry name" value="SspK"/>
    <property type="match status" value="1"/>
</dbReference>
<dbReference type="InterPro" id="IPR012611">
    <property type="entry name" value="SASP_SspK"/>
</dbReference>
<dbReference type="NCBIfam" id="TIGR03091">
    <property type="entry name" value="SASP_sspK"/>
    <property type="match status" value="1"/>
</dbReference>
<dbReference type="Pfam" id="PF08176">
    <property type="entry name" value="SspK"/>
    <property type="match status" value="1"/>
</dbReference>
<gene>
    <name evidence="1" type="primary">sspK</name>
    <name type="ordered locus">ABC1307</name>
</gene>
<comment type="subcellular location">
    <subcellularLocation>
        <location evidence="1">Spore core</location>
    </subcellularLocation>
</comment>
<comment type="induction">
    <text evidence="1">Expressed only in the forespore compartment of sporulating cells.</text>
</comment>
<comment type="similarity">
    <text evidence="1">Belongs to the SspK family.</text>
</comment>
<reference key="1">
    <citation type="submission" date="2003-10" db="EMBL/GenBank/DDBJ databases">
        <title>The complete genome sequence of the alkaliphilic Bacillus clausii KSM-K16.</title>
        <authorList>
            <person name="Takaki Y."/>
            <person name="Kageyama Y."/>
            <person name="Shimamura S."/>
            <person name="Suzuki H."/>
            <person name="Nishi S."/>
            <person name="Hatada Y."/>
            <person name="Kawai S."/>
            <person name="Ito S."/>
            <person name="Horikoshi K."/>
        </authorList>
    </citation>
    <scope>NUCLEOTIDE SEQUENCE [LARGE SCALE GENOMIC DNA]</scope>
    <source>
        <strain>KSM-K16</strain>
    </source>
</reference>
<sequence length="51" mass="5798">MRNKAKGFPNPISFNGNKANNADEHASKRPDGTTRDRPQERMRSSNHFNSL</sequence>
<protein>
    <recommendedName>
        <fullName evidence="1">Small, acid-soluble spore protein K</fullName>
        <shortName evidence="1">SASP K</shortName>
    </recommendedName>
</protein>
<organism>
    <name type="scientific">Shouchella clausii (strain KSM-K16)</name>
    <name type="common">Alkalihalobacillus clausii</name>
    <dbReference type="NCBI Taxonomy" id="66692"/>
    <lineage>
        <taxon>Bacteria</taxon>
        <taxon>Bacillati</taxon>
        <taxon>Bacillota</taxon>
        <taxon>Bacilli</taxon>
        <taxon>Bacillales</taxon>
        <taxon>Bacillaceae</taxon>
        <taxon>Shouchella</taxon>
    </lineage>
</organism>
<proteinExistence type="inferred from homology"/>
<name>SSPK_SHOC1</name>